<keyword id="KW-0001">2Fe-2S</keyword>
<keyword id="KW-0004">4Fe-4S</keyword>
<keyword id="KW-0093">Biotin biosynthesis</keyword>
<keyword id="KW-0408">Iron</keyword>
<keyword id="KW-0411">Iron-sulfur</keyword>
<keyword id="KW-0479">Metal-binding</keyword>
<keyword id="KW-0949">S-adenosyl-L-methionine</keyword>
<keyword id="KW-0808">Transferase</keyword>
<proteinExistence type="inferred from homology"/>
<accession>A7ZY31</accession>
<evidence type="ECO:0000255" key="1">
    <source>
        <dbReference type="HAMAP-Rule" id="MF_01694"/>
    </source>
</evidence>
<evidence type="ECO:0000255" key="2">
    <source>
        <dbReference type="PROSITE-ProRule" id="PRU01266"/>
    </source>
</evidence>
<organism>
    <name type="scientific">Escherichia coli O9:H4 (strain HS)</name>
    <dbReference type="NCBI Taxonomy" id="331112"/>
    <lineage>
        <taxon>Bacteria</taxon>
        <taxon>Pseudomonadati</taxon>
        <taxon>Pseudomonadota</taxon>
        <taxon>Gammaproteobacteria</taxon>
        <taxon>Enterobacterales</taxon>
        <taxon>Enterobacteriaceae</taxon>
        <taxon>Escherichia</taxon>
    </lineage>
</organism>
<gene>
    <name evidence="1" type="primary">bioB</name>
    <name type="ordered locus">EcHS_A0828</name>
</gene>
<feature type="chain" id="PRO_0000381365" description="Biotin synthase">
    <location>
        <begin position="1"/>
        <end position="346"/>
    </location>
</feature>
<feature type="domain" description="Radical SAM core" evidence="2">
    <location>
        <begin position="38"/>
        <end position="256"/>
    </location>
</feature>
<feature type="binding site" evidence="1">
    <location>
        <position position="53"/>
    </location>
    <ligand>
        <name>[4Fe-4S] cluster</name>
        <dbReference type="ChEBI" id="CHEBI:49883"/>
        <note>4Fe-4S-S-AdoMet</note>
    </ligand>
</feature>
<feature type="binding site" evidence="1">
    <location>
        <position position="57"/>
    </location>
    <ligand>
        <name>[4Fe-4S] cluster</name>
        <dbReference type="ChEBI" id="CHEBI:49883"/>
        <note>4Fe-4S-S-AdoMet</note>
    </ligand>
</feature>
<feature type="binding site" evidence="1">
    <location>
        <position position="60"/>
    </location>
    <ligand>
        <name>[4Fe-4S] cluster</name>
        <dbReference type="ChEBI" id="CHEBI:49883"/>
        <note>4Fe-4S-S-AdoMet</note>
    </ligand>
</feature>
<feature type="binding site" evidence="1">
    <location>
        <position position="97"/>
    </location>
    <ligand>
        <name>[2Fe-2S] cluster</name>
        <dbReference type="ChEBI" id="CHEBI:190135"/>
    </ligand>
</feature>
<feature type="binding site" evidence="1">
    <location>
        <position position="128"/>
    </location>
    <ligand>
        <name>[2Fe-2S] cluster</name>
        <dbReference type="ChEBI" id="CHEBI:190135"/>
    </ligand>
</feature>
<feature type="binding site" evidence="1">
    <location>
        <position position="188"/>
    </location>
    <ligand>
        <name>[2Fe-2S] cluster</name>
        <dbReference type="ChEBI" id="CHEBI:190135"/>
    </ligand>
</feature>
<feature type="binding site" evidence="1">
    <location>
        <position position="260"/>
    </location>
    <ligand>
        <name>[2Fe-2S] cluster</name>
        <dbReference type="ChEBI" id="CHEBI:190135"/>
    </ligand>
</feature>
<sequence length="346" mass="38648">MAHRPRWTLSQVTELFEKPLLDLLFEAQQVHRQHFDPRQVQVSTLLSIKTGACPEDCKYCPQSSRYKTGLEAERLMEVEQVLESARKAKAAGSTRFCMGAAWKNPHERDMPYLEQMVQGVKAMGLEACMTLGTLSESQAQRLANAGLDYYNHNLDTSPEFYGNIITTRTYQERLDTLEKVRDAGIKVCSGGIVGLGETVKDRAGLLLQLANLPTPPESVPINMLVKVKGTPLADNDDVDAFDFIRTIAVARIMMPTSYVRLSAGREQMNEQTQAMCFMAGANSIFYGCKLLTTPNPEEDKDLQLFRKLGLNPQQTAVLAGDNEQQQRLEQALMTPDTDEYYNAAAL</sequence>
<reference key="1">
    <citation type="journal article" date="2008" name="J. Bacteriol.">
        <title>The pangenome structure of Escherichia coli: comparative genomic analysis of E. coli commensal and pathogenic isolates.</title>
        <authorList>
            <person name="Rasko D.A."/>
            <person name="Rosovitz M.J."/>
            <person name="Myers G.S.A."/>
            <person name="Mongodin E.F."/>
            <person name="Fricke W.F."/>
            <person name="Gajer P."/>
            <person name="Crabtree J."/>
            <person name="Sebaihia M."/>
            <person name="Thomson N.R."/>
            <person name="Chaudhuri R."/>
            <person name="Henderson I.R."/>
            <person name="Sperandio V."/>
            <person name="Ravel J."/>
        </authorList>
    </citation>
    <scope>NUCLEOTIDE SEQUENCE [LARGE SCALE GENOMIC DNA]</scope>
    <source>
        <strain>HS</strain>
    </source>
</reference>
<name>BIOB_ECOHS</name>
<dbReference type="EC" id="2.8.1.6" evidence="1"/>
<dbReference type="EMBL" id="CP000802">
    <property type="protein sequence ID" value="ABV05185.1"/>
    <property type="molecule type" value="Genomic_DNA"/>
</dbReference>
<dbReference type="RefSeq" id="WP_000951213.1">
    <property type="nucleotide sequence ID" value="NC_009800.1"/>
</dbReference>
<dbReference type="SMR" id="A7ZY31"/>
<dbReference type="GeneID" id="93776655"/>
<dbReference type="KEGG" id="ecx:EcHS_A0828"/>
<dbReference type="HOGENOM" id="CLU_033172_1_2_6"/>
<dbReference type="UniPathway" id="UPA00078">
    <property type="reaction ID" value="UER00162"/>
</dbReference>
<dbReference type="GO" id="GO:0051537">
    <property type="term" value="F:2 iron, 2 sulfur cluster binding"/>
    <property type="evidence" value="ECO:0007669"/>
    <property type="project" value="UniProtKB-KW"/>
</dbReference>
<dbReference type="GO" id="GO:0051539">
    <property type="term" value="F:4 iron, 4 sulfur cluster binding"/>
    <property type="evidence" value="ECO:0007669"/>
    <property type="project" value="UniProtKB-KW"/>
</dbReference>
<dbReference type="GO" id="GO:0004076">
    <property type="term" value="F:biotin synthase activity"/>
    <property type="evidence" value="ECO:0007669"/>
    <property type="project" value="UniProtKB-UniRule"/>
</dbReference>
<dbReference type="GO" id="GO:0005506">
    <property type="term" value="F:iron ion binding"/>
    <property type="evidence" value="ECO:0007669"/>
    <property type="project" value="UniProtKB-UniRule"/>
</dbReference>
<dbReference type="GO" id="GO:0009102">
    <property type="term" value="P:biotin biosynthetic process"/>
    <property type="evidence" value="ECO:0007669"/>
    <property type="project" value="UniProtKB-UniRule"/>
</dbReference>
<dbReference type="CDD" id="cd01335">
    <property type="entry name" value="Radical_SAM"/>
    <property type="match status" value="1"/>
</dbReference>
<dbReference type="FunFam" id="3.20.20.70:FF:000011">
    <property type="entry name" value="Biotin synthase"/>
    <property type="match status" value="1"/>
</dbReference>
<dbReference type="Gene3D" id="3.20.20.70">
    <property type="entry name" value="Aldolase class I"/>
    <property type="match status" value="1"/>
</dbReference>
<dbReference type="HAMAP" id="MF_01694">
    <property type="entry name" value="BioB"/>
    <property type="match status" value="1"/>
</dbReference>
<dbReference type="InterPro" id="IPR013785">
    <property type="entry name" value="Aldolase_TIM"/>
</dbReference>
<dbReference type="InterPro" id="IPR010722">
    <property type="entry name" value="BATS_dom"/>
</dbReference>
<dbReference type="InterPro" id="IPR002684">
    <property type="entry name" value="Biotin_synth/BioAB"/>
</dbReference>
<dbReference type="InterPro" id="IPR024177">
    <property type="entry name" value="Biotin_synthase"/>
</dbReference>
<dbReference type="InterPro" id="IPR006638">
    <property type="entry name" value="Elp3/MiaA/NifB-like_rSAM"/>
</dbReference>
<dbReference type="InterPro" id="IPR007197">
    <property type="entry name" value="rSAM"/>
</dbReference>
<dbReference type="NCBIfam" id="TIGR00433">
    <property type="entry name" value="bioB"/>
    <property type="match status" value="1"/>
</dbReference>
<dbReference type="PANTHER" id="PTHR22976">
    <property type="entry name" value="BIOTIN SYNTHASE"/>
    <property type="match status" value="1"/>
</dbReference>
<dbReference type="PANTHER" id="PTHR22976:SF2">
    <property type="entry name" value="BIOTIN SYNTHASE, MITOCHONDRIAL"/>
    <property type="match status" value="1"/>
</dbReference>
<dbReference type="Pfam" id="PF06968">
    <property type="entry name" value="BATS"/>
    <property type="match status" value="1"/>
</dbReference>
<dbReference type="Pfam" id="PF04055">
    <property type="entry name" value="Radical_SAM"/>
    <property type="match status" value="1"/>
</dbReference>
<dbReference type="PIRSF" id="PIRSF001619">
    <property type="entry name" value="Biotin_synth"/>
    <property type="match status" value="1"/>
</dbReference>
<dbReference type="SFLD" id="SFLDG01060">
    <property type="entry name" value="BATS_domain_containing"/>
    <property type="match status" value="1"/>
</dbReference>
<dbReference type="SFLD" id="SFLDF00272">
    <property type="entry name" value="biotin_synthase"/>
    <property type="match status" value="1"/>
</dbReference>
<dbReference type="SMART" id="SM00876">
    <property type="entry name" value="BATS"/>
    <property type="match status" value="1"/>
</dbReference>
<dbReference type="SMART" id="SM00729">
    <property type="entry name" value="Elp3"/>
    <property type="match status" value="1"/>
</dbReference>
<dbReference type="SUPFAM" id="SSF102114">
    <property type="entry name" value="Radical SAM enzymes"/>
    <property type="match status" value="1"/>
</dbReference>
<dbReference type="PROSITE" id="PS51918">
    <property type="entry name" value="RADICAL_SAM"/>
    <property type="match status" value="1"/>
</dbReference>
<protein>
    <recommendedName>
        <fullName evidence="1">Biotin synthase</fullName>
        <ecNumber evidence="1">2.8.1.6</ecNumber>
    </recommendedName>
</protein>
<comment type="function">
    <text evidence="1">Catalyzes the conversion of dethiobiotin (DTB) to biotin by the insertion of a sulfur atom into dethiobiotin via a radical-based mechanism.</text>
</comment>
<comment type="catalytic activity">
    <reaction evidence="1">
        <text>(4R,5S)-dethiobiotin + (sulfur carrier)-SH + 2 reduced [2Fe-2S]-[ferredoxin] + 2 S-adenosyl-L-methionine = (sulfur carrier)-H + biotin + 2 5'-deoxyadenosine + 2 L-methionine + 2 oxidized [2Fe-2S]-[ferredoxin]</text>
        <dbReference type="Rhea" id="RHEA:22060"/>
        <dbReference type="Rhea" id="RHEA-COMP:10000"/>
        <dbReference type="Rhea" id="RHEA-COMP:10001"/>
        <dbReference type="Rhea" id="RHEA-COMP:14737"/>
        <dbReference type="Rhea" id="RHEA-COMP:14739"/>
        <dbReference type="ChEBI" id="CHEBI:17319"/>
        <dbReference type="ChEBI" id="CHEBI:29917"/>
        <dbReference type="ChEBI" id="CHEBI:33737"/>
        <dbReference type="ChEBI" id="CHEBI:33738"/>
        <dbReference type="ChEBI" id="CHEBI:57586"/>
        <dbReference type="ChEBI" id="CHEBI:57844"/>
        <dbReference type="ChEBI" id="CHEBI:59789"/>
        <dbReference type="ChEBI" id="CHEBI:64428"/>
        <dbReference type="ChEBI" id="CHEBI:149473"/>
        <dbReference type="EC" id="2.8.1.6"/>
    </reaction>
</comment>
<comment type="cofactor">
    <cofactor evidence="1">
        <name>[4Fe-4S] cluster</name>
        <dbReference type="ChEBI" id="CHEBI:49883"/>
    </cofactor>
    <text evidence="1">Binds 1 [4Fe-4S] cluster. The cluster is coordinated with 3 cysteines and an exchangeable S-adenosyl-L-methionine.</text>
</comment>
<comment type="cofactor">
    <cofactor evidence="1">
        <name>[2Fe-2S] cluster</name>
        <dbReference type="ChEBI" id="CHEBI:190135"/>
    </cofactor>
    <text evidence="1">Binds 1 [2Fe-2S] cluster. The cluster is coordinated with 3 cysteines and 1 arginine.</text>
</comment>
<comment type="pathway">
    <text evidence="1">Cofactor biosynthesis; biotin biosynthesis; biotin from 7,8-diaminononanoate: step 2/2.</text>
</comment>
<comment type="subunit">
    <text evidence="1">Homodimer.</text>
</comment>
<comment type="similarity">
    <text evidence="1">Belongs to the radical SAM superfamily. Biotin synthase family.</text>
</comment>